<feature type="chain" id="PRO_1000140616" description="Small ribosomal subunit protein uS8">
    <location>
        <begin position="1"/>
        <end position="132"/>
    </location>
</feature>
<evidence type="ECO:0000255" key="1">
    <source>
        <dbReference type="HAMAP-Rule" id="MF_01302"/>
    </source>
</evidence>
<evidence type="ECO:0000305" key="2"/>
<gene>
    <name evidence="1" type="primary">rpsH</name>
    <name type="ordered locus">SGR_2820</name>
</gene>
<protein>
    <recommendedName>
        <fullName evidence="1">Small ribosomal subunit protein uS8</fullName>
    </recommendedName>
    <alternativeName>
        <fullName evidence="2">30S ribosomal protein S8</fullName>
    </alternativeName>
</protein>
<accession>B1W3Z3</accession>
<dbReference type="EMBL" id="AP009493">
    <property type="protein sequence ID" value="BAG19649.1"/>
    <property type="molecule type" value="Genomic_DNA"/>
</dbReference>
<dbReference type="RefSeq" id="WP_003966947.1">
    <property type="nucleotide sequence ID" value="NC_010572.1"/>
</dbReference>
<dbReference type="SMR" id="B1W3Z3"/>
<dbReference type="GeneID" id="96290681"/>
<dbReference type="KEGG" id="sgr:SGR_2820"/>
<dbReference type="eggNOG" id="COG0096">
    <property type="taxonomic scope" value="Bacteria"/>
</dbReference>
<dbReference type="HOGENOM" id="CLU_098428_0_1_11"/>
<dbReference type="Proteomes" id="UP000001685">
    <property type="component" value="Chromosome"/>
</dbReference>
<dbReference type="GO" id="GO:1990904">
    <property type="term" value="C:ribonucleoprotein complex"/>
    <property type="evidence" value="ECO:0007669"/>
    <property type="project" value="UniProtKB-KW"/>
</dbReference>
<dbReference type="GO" id="GO:0005840">
    <property type="term" value="C:ribosome"/>
    <property type="evidence" value="ECO:0007669"/>
    <property type="project" value="UniProtKB-KW"/>
</dbReference>
<dbReference type="GO" id="GO:0019843">
    <property type="term" value="F:rRNA binding"/>
    <property type="evidence" value="ECO:0007669"/>
    <property type="project" value="UniProtKB-UniRule"/>
</dbReference>
<dbReference type="GO" id="GO:0003735">
    <property type="term" value="F:structural constituent of ribosome"/>
    <property type="evidence" value="ECO:0007669"/>
    <property type="project" value="InterPro"/>
</dbReference>
<dbReference type="GO" id="GO:0006412">
    <property type="term" value="P:translation"/>
    <property type="evidence" value="ECO:0007669"/>
    <property type="project" value="UniProtKB-UniRule"/>
</dbReference>
<dbReference type="FunFam" id="3.30.1370.30:FF:000002">
    <property type="entry name" value="30S ribosomal protein S8"/>
    <property type="match status" value="1"/>
</dbReference>
<dbReference type="FunFam" id="3.30.1490.10:FF:000001">
    <property type="entry name" value="30S ribosomal protein S8"/>
    <property type="match status" value="1"/>
</dbReference>
<dbReference type="Gene3D" id="3.30.1370.30">
    <property type="match status" value="1"/>
</dbReference>
<dbReference type="Gene3D" id="3.30.1490.10">
    <property type="match status" value="1"/>
</dbReference>
<dbReference type="HAMAP" id="MF_01302_B">
    <property type="entry name" value="Ribosomal_uS8_B"/>
    <property type="match status" value="1"/>
</dbReference>
<dbReference type="InterPro" id="IPR000630">
    <property type="entry name" value="Ribosomal_uS8"/>
</dbReference>
<dbReference type="InterPro" id="IPR035987">
    <property type="entry name" value="Ribosomal_uS8_sf"/>
</dbReference>
<dbReference type="NCBIfam" id="NF001109">
    <property type="entry name" value="PRK00136.1"/>
    <property type="match status" value="1"/>
</dbReference>
<dbReference type="PANTHER" id="PTHR11758">
    <property type="entry name" value="40S RIBOSOMAL PROTEIN S15A"/>
    <property type="match status" value="1"/>
</dbReference>
<dbReference type="Pfam" id="PF00410">
    <property type="entry name" value="Ribosomal_S8"/>
    <property type="match status" value="1"/>
</dbReference>
<dbReference type="SUPFAM" id="SSF56047">
    <property type="entry name" value="Ribosomal protein S8"/>
    <property type="match status" value="1"/>
</dbReference>
<reference key="1">
    <citation type="journal article" date="2008" name="J. Bacteriol.">
        <title>Genome sequence of the streptomycin-producing microorganism Streptomyces griseus IFO 13350.</title>
        <authorList>
            <person name="Ohnishi Y."/>
            <person name="Ishikawa J."/>
            <person name="Hara H."/>
            <person name="Suzuki H."/>
            <person name="Ikenoya M."/>
            <person name="Ikeda H."/>
            <person name="Yamashita A."/>
            <person name="Hattori M."/>
            <person name="Horinouchi S."/>
        </authorList>
    </citation>
    <scope>NUCLEOTIDE SEQUENCE [LARGE SCALE GENOMIC DNA]</scope>
    <source>
        <strain>JCM 4626 / CBS 651.72 / NBRC 13350 / KCC S-0626 / ISP 5235</strain>
    </source>
</reference>
<sequence length="132" mass="14279">MTMTDPIADMLTRLRNANSAYHDSVVMPHSKIKSHIAEILQQEGFITGWKVEDAEVGKNLVLELKFGPNRERSIAGIKRISKPGLRVYAKSTNLPKVLGGLGVAIISTSHGLLTGQQAGKKGVGGEVLAYVW</sequence>
<comment type="function">
    <text evidence="1">One of the primary rRNA binding proteins, it binds directly to 16S rRNA central domain where it helps coordinate assembly of the platform of the 30S subunit.</text>
</comment>
<comment type="subunit">
    <text evidence="1">Part of the 30S ribosomal subunit. Contacts proteins S5 and S12.</text>
</comment>
<comment type="similarity">
    <text evidence="1">Belongs to the universal ribosomal protein uS8 family.</text>
</comment>
<name>RS8_STRGG</name>
<keyword id="KW-0687">Ribonucleoprotein</keyword>
<keyword id="KW-0689">Ribosomal protein</keyword>
<keyword id="KW-0694">RNA-binding</keyword>
<keyword id="KW-0699">rRNA-binding</keyword>
<organism>
    <name type="scientific">Streptomyces griseus subsp. griseus (strain JCM 4626 / CBS 651.72 / NBRC 13350 / KCC S-0626 / ISP 5235)</name>
    <dbReference type="NCBI Taxonomy" id="455632"/>
    <lineage>
        <taxon>Bacteria</taxon>
        <taxon>Bacillati</taxon>
        <taxon>Actinomycetota</taxon>
        <taxon>Actinomycetes</taxon>
        <taxon>Kitasatosporales</taxon>
        <taxon>Streptomycetaceae</taxon>
        <taxon>Streptomyces</taxon>
    </lineage>
</organism>
<proteinExistence type="inferred from homology"/>